<feature type="chain" id="PRO_0000069441" description="Endothelin receptor type B">
    <location>
        <begin position="1" status="less than"/>
        <end position="347"/>
    </location>
</feature>
<feature type="topological domain" description="Extracellular" evidence="2">
    <location>
        <begin position="1" status="less than"/>
        <end position="7"/>
    </location>
</feature>
<feature type="transmembrane region" description="Helical; Name=1" evidence="2">
    <location>
        <begin position="8"/>
        <end position="32"/>
    </location>
</feature>
<feature type="topological domain" description="Cytoplasmic" evidence="2">
    <location>
        <begin position="33"/>
        <end position="43"/>
    </location>
</feature>
<feature type="transmembrane region" description="Helical; Name=2" evidence="2">
    <location>
        <begin position="44"/>
        <end position="69"/>
    </location>
</feature>
<feature type="topological domain" description="Extracellular" evidence="2">
    <location>
        <begin position="70"/>
        <end position="81"/>
    </location>
</feature>
<feature type="transmembrane region" description="Helical; Name=3" evidence="2">
    <location>
        <begin position="82"/>
        <end position="103"/>
    </location>
</feature>
<feature type="topological domain" description="Cytoplasmic" evidence="2">
    <location>
        <begin position="104"/>
        <end position="124"/>
    </location>
</feature>
<feature type="transmembrane region" description="Helical; Name=4" evidence="2">
    <location>
        <begin position="125"/>
        <end position="149"/>
    </location>
</feature>
<feature type="topological domain" description="Extracellular" evidence="2">
    <location>
        <begin position="150"/>
        <end position="177"/>
    </location>
</feature>
<feature type="transmembrane region" description="Helical; Name=5" evidence="2">
    <location>
        <begin position="178"/>
        <end position="202"/>
    </location>
</feature>
<feature type="topological domain" description="Cytoplasmic" evidence="2">
    <location>
        <begin position="203"/>
        <end position="230"/>
    </location>
</feature>
<feature type="transmembrane region" description="Helical; Name=6" evidence="2">
    <location>
        <begin position="231"/>
        <end position="256"/>
    </location>
</feature>
<feature type="topological domain" description="Extracellular" evidence="2">
    <location>
        <begin position="257"/>
        <end position="268"/>
    </location>
</feature>
<feature type="transmembrane region" description="Helical; Name=7" evidence="2">
    <location>
        <begin position="269"/>
        <end position="295"/>
    </location>
</feature>
<feature type="topological domain" description="Cytoplasmic" evidence="2">
    <location>
        <begin position="296"/>
        <end position="347"/>
    </location>
</feature>
<feature type="lipid moiety-binding region" description="S-palmitoyl cysteine" evidence="1">
    <location>
        <position position="309"/>
    </location>
</feature>
<feature type="lipid moiety-binding region" description="S-palmitoyl cysteine" evidence="1">
    <location>
        <position position="311"/>
    </location>
</feature>
<feature type="disulfide bond" evidence="3">
    <location>
        <begin position="80"/>
        <end position="161"/>
    </location>
</feature>
<feature type="non-terminal residue">
    <location>
        <position position="1"/>
    </location>
</feature>
<gene>
    <name type="primary">EDNRB</name>
</gene>
<proteinExistence type="evidence at transcript level"/>
<protein>
    <recommendedName>
        <fullName evidence="4">Endothelin receptor type B</fullName>
        <shortName>ET-B</shortName>
        <shortName>ET-BR</shortName>
    </recommendedName>
    <alternativeName>
        <fullName>Endothelin receptor non-selective type</fullName>
    </alternativeName>
</protein>
<sequence>EIKETFKYINTVVSCLVFVLGIIGNSTLLRIIYKNKCMRNGPNILIASLALGDLLHIIIDIPISVYKLLAEDWPFGVEMCKLVPFIQKASVGITVLSLCALSIDRYRAVASWSRIKGIGVPKWTAVEIVLIWVISVVLAVPEAIAFDMITMEYRGKDLRICLLHPTQKTSFMMFYKQAKDWWLFSFYFCLPLAITALFYTLMTCEMLRKKSGMQIALNDHLKQRREVAKTVFCLVLVFALCWLPLHLSRILKLTIYDQKDPNRCELLSFFLVMDYIGINMASLNSCINPIALYLVSKRFQNCFKSCLCCWCQSKDLLSLEERQSCLKFKANDHGYDNFRSSNKYSSS</sequence>
<comment type="function">
    <text evidence="1">Non-specific receptor for endothelin 1, 2, and 3. Mediates its action by association with G proteins that activate a phosphatidylinositol-calcium second messenger system (By similarity).</text>
</comment>
<comment type="subcellular location">
    <subcellularLocation>
        <location>Cell membrane</location>
        <topology>Multi-pass membrane protein</topology>
    </subcellularLocation>
</comment>
<comment type="similarity">
    <text evidence="3">Belongs to the G-protein coupled receptor 1 family. Endothelin receptor subfamily. EDNRB sub-subfamily.</text>
</comment>
<organism>
    <name type="scientific">Coturnix japonica</name>
    <name type="common">Japanese quail</name>
    <name type="synonym">Coturnix coturnix japonica</name>
    <dbReference type="NCBI Taxonomy" id="93934"/>
    <lineage>
        <taxon>Eukaryota</taxon>
        <taxon>Metazoa</taxon>
        <taxon>Chordata</taxon>
        <taxon>Craniata</taxon>
        <taxon>Vertebrata</taxon>
        <taxon>Euteleostomi</taxon>
        <taxon>Archelosauria</taxon>
        <taxon>Archosauria</taxon>
        <taxon>Dinosauria</taxon>
        <taxon>Saurischia</taxon>
        <taxon>Theropoda</taxon>
        <taxon>Coelurosauria</taxon>
        <taxon>Aves</taxon>
        <taxon>Neognathae</taxon>
        <taxon>Galloanserae</taxon>
        <taxon>Galliformes</taxon>
        <taxon>Phasianidae</taxon>
        <taxon>Perdicinae</taxon>
        <taxon>Coturnix</taxon>
    </lineage>
</organism>
<reference key="1">
    <citation type="journal article" date="1996" name="Proc. Natl. Acad. Sci. U.S.A.">
        <title>Endothelin-B receptor is expressed by neural crest cells in the avian embryo.</title>
        <authorList>
            <person name="Nataf V."/>
            <person name="Lecoin L."/>
            <person name="Eichmann A."/>
            <person name="le Douarin N.M."/>
        </authorList>
    </citation>
    <scope>NUCLEOTIDE SEQUENCE [MRNA]</scope>
</reference>
<evidence type="ECO:0000250" key="1"/>
<evidence type="ECO:0000255" key="2"/>
<evidence type="ECO:0000255" key="3">
    <source>
        <dbReference type="PROSITE-ProRule" id="PRU00521"/>
    </source>
</evidence>
<evidence type="ECO:0000305" key="4"/>
<accession>Q90328</accession>
<name>EDNRB_COTJA</name>
<keyword id="KW-1003">Cell membrane</keyword>
<keyword id="KW-1015">Disulfide bond</keyword>
<keyword id="KW-0297">G-protein coupled receptor</keyword>
<keyword id="KW-0449">Lipoprotein</keyword>
<keyword id="KW-0472">Membrane</keyword>
<keyword id="KW-0564">Palmitate</keyword>
<keyword id="KW-0675">Receptor</keyword>
<keyword id="KW-1185">Reference proteome</keyword>
<keyword id="KW-0807">Transducer</keyword>
<keyword id="KW-0812">Transmembrane</keyword>
<keyword id="KW-1133">Transmembrane helix</keyword>
<dbReference type="EMBL" id="X99295">
    <property type="protein sequence ID" value="CAA67681.1"/>
    <property type="molecule type" value="mRNA"/>
</dbReference>
<dbReference type="SMR" id="Q90328"/>
<dbReference type="Proteomes" id="UP000694412">
    <property type="component" value="Unplaced"/>
</dbReference>
<dbReference type="GO" id="GO:0005886">
    <property type="term" value="C:plasma membrane"/>
    <property type="evidence" value="ECO:0007669"/>
    <property type="project" value="UniProtKB-SubCell"/>
</dbReference>
<dbReference type="GO" id="GO:0004962">
    <property type="term" value="F:endothelin receptor activity"/>
    <property type="evidence" value="ECO:0007669"/>
    <property type="project" value="InterPro"/>
</dbReference>
<dbReference type="GO" id="GO:0048066">
    <property type="term" value="P:developmental pigmentation"/>
    <property type="evidence" value="ECO:0007669"/>
    <property type="project" value="TreeGrafter"/>
</dbReference>
<dbReference type="GO" id="GO:0048484">
    <property type="term" value="P:enteric nervous system development"/>
    <property type="evidence" value="ECO:0007669"/>
    <property type="project" value="InterPro"/>
</dbReference>
<dbReference type="GO" id="GO:0008217">
    <property type="term" value="P:regulation of blood pressure"/>
    <property type="evidence" value="ECO:0007669"/>
    <property type="project" value="InterPro"/>
</dbReference>
<dbReference type="GO" id="GO:0042310">
    <property type="term" value="P:vasoconstriction"/>
    <property type="evidence" value="ECO:0007669"/>
    <property type="project" value="InterPro"/>
</dbReference>
<dbReference type="CDD" id="cd15976">
    <property type="entry name" value="7tmA_ET-BR"/>
    <property type="match status" value="1"/>
</dbReference>
<dbReference type="FunFam" id="1.20.1070.10:FF:000076">
    <property type="entry name" value="Endothelin receptor type B"/>
    <property type="match status" value="1"/>
</dbReference>
<dbReference type="Gene3D" id="1.20.1070.10">
    <property type="entry name" value="Rhodopsin 7-helix transmembrane proteins"/>
    <property type="match status" value="1"/>
</dbReference>
<dbReference type="InterPro" id="IPR000499">
    <property type="entry name" value="Endthln_rcpt"/>
</dbReference>
<dbReference type="InterPro" id="IPR001112">
    <property type="entry name" value="ETB_rcpt"/>
</dbReference>
<dbReference type="InterPro" id="IPR051193">
    <property type="entry name" value="GPCR_endothelin_rcpt"/>
</dbReference>
<dbReference type="InterPro" id="IPR000276">
    <property type="entry name" value="GPCR_Rhodpsn"/>
</dbReference>
<dbReference type="InterPro" id="IPR017452">
    <property type="entry name" value="GPCR_Rhodpsn_7TM"/>
</dbReference>
<dbReference type="PANTHER" id="PTHR46099:SF3">
    <property type="entry name" value="ENDOTHELIN RECEPTOR TYPE B"/>
    <property type="match status" value="1"/>
</dbReference>
<dbReference type="PANTHER" id="PTHR46099">
    <property type="entry name" value="G_PROTEIN_RECEP_F1_2 DOMAIN-CONTAINING PROTEIN"/>
    <property type="match status" value="1"/>
</dbReference>
<dbReference type="Pfam" id="PF00001">
    <property type="entry name" value="7tm_1"/>
    <property type="match status" value="1"/>
</dbReference>
<dbReference type="PRINTS" id="PR00571">
    <property type="entry name" value="ENDOTHELINBR"/>
</dbReference>
<dbReference type="PRINTS" id="PR00366">
    <property type="entry name" value="ENDOTHELINR"/>
</dbReference>
<dbReference type="PRINTS" id="PR00237">
    <property type="entry name" value="GPCRRHODOPSN"/>
</dbReference>
<dbReference type="SMART" id="SM01381">
    <property type="entry name" value="7TM_GPCR_Srsx"/>
    <property type="match status" value="1"/>
</dbReference>
<dbReference type="SUPFAM" id="SSF81321">
    <property type="entry name" value="Family A G protein-coupled receptor-like"/>
    <property type="match status" value="1"/>
</dbReference>
<dbReference type="PROSITE" id="PS00237">
    <property type="entry name" value="G_PROTEIN_RECEP_F1_1"/>
    <property type="match status" value="1"/>
</dbReference>
<dbReference type="PROSITE" id="PS50262">
    <property type="entry name" value="G_PROTEIN_RECEP_F1_2"/>
    <property type="match status" value="1"/>
</dbReference>